<comment type="function">
    <text evidence="1">Lignin degradation and detoxification of lignin-derived products.</text>
</comment>
<comment type="catalytic activity">
    <reaction>
        <text>4 hydroquinone + O2 = 4 benzosemiquinone + 2 H2O</text>
        <dbReference type="Rhea" id="RHEA:11276"/>
        <dbReference type="ChEBI" id="CHEBI:15377"/>
        <dbReference type="ChEBI" id="CHEBI:15379"/>
        <dbReference type="ChEBI" id="CHEBI:17594"/>
        <dbReference type="ChEBI" id="CHEBI:17977"/>
        <dbReference type="EC" id="1.10.3.2"/>
    </reaction>
</comment>
<comment type="cofactor">
    <cofactor evidence="1">
        <name>Cu cation</name>
        <dbReference type="ChEBI" id="CHEBI:23378"/>
    </cofactor>
    <text evidence="1">Binds 4 Cu cations per monomer.</text>
</comment>
<comment type="subcellular location">
    <subcellularLocation>
        <location evidence="4">Secreted</location>
        <location evidence="4">Extracellular space</location>
        <location evidence="4">Apoplast</location>
    </subcellularLocation>
</comment>
<comment type="tissue specificity">
    <text evidence="3">Mostly expressed in roots. Also detected in leaves, stems and flowers but not in siliques.</text>
</comment>
<comment type="similarity">
    <text evidence="4">Belongs to the multicopper oxidase family.</text>
</comment>
<organism>
    <name type="scientific">Arabidopsis thaliana</name>
    <name type="common">Mouse-ear cress</name>
    <dbReference type="NCBI Taxonomy" id="3702"/>
    <lineage>
        <taxon>Eukaryota</taxon>
        <taxon>Viridiplantae</taxon>
        <taxon>Streptophyta</taxon>
        <taxon>Embryophyta</taxon>
        <taxon>Tracheophyta</taxon>
        <taxon>Spermatophyta</taxon>
        <taxon>Magnoliopsida</taxon>
        <taxon>eudicotyledons</taxon>
        <taxon>Gunneridae</taxon>
        <taxon>Pentapetalae</taxon>
        <taxon>rosids</taxon>
        <taxon>malvids</taxon>
        <taxon>Brassicales</taxon>
        <taxon>Brassicaceae</taxon>
        <taxon>Camelineae</taxon>
        <taxon>Arabidopsis</taxon>
    </lineage>
</organism>
<sequence length="569" mass="63145">MEQLRPFFLLLAIFVASLVNAEVHFHEFVIQETPVKRLCRVHNSITVNGQFPGPTLEVRNGDSLVITAINKARYNISLHWHGIRQMRNPWADGPEYITQCPIQPGGSYTYRFTMEDQEGTLWWHAHSRWLRATVYGALIIRPPLSSPHYPFPVIPKREITLLLGEWWDRNPMDVLNLAQFTGAAPNISDAFTINGQPGDLYRCSSQETLRFLVGSGEIVLLRVINSALNQELFFGVANHKLTVVAADASYTKPFSTNVIMLGPGQTTDVLLTADQPPAHYYMAAHAYNSANAAFDNTTTTAILKYKDASCVTLQAKSQARAIPAQLPGFNDTATAAAFTAQMKSPSKVKVPLEIDENLFFTVGLGLFNCPTPNTQRCQGPNGTRFTASINNVSFVFPKQNSIMQAYYQGTPTGVFTTDFPPTPPVTFDYTGNVSRGLWQPTRGTKAYKLKFNSQVQIILQDTSIVTTENHPMHLHGYEFYVVGTGVGNFNPNTDTSSFNLIDPPRRNTIGTPPGGWVAIRFVANNPGAWLMHCHIDSHIFWGLAMVFLVENGEGHLQSVQSPPLDLPQC</sequence>
<evidence type="ECO:0000250" key="1"/>
<evidence type="ECO:0000255" key="2"/>
<evidence type="ECO:0000269" key="3">
    <source>
    </source>
</evidence>
<evidence type="ECO:0000305" key="4"/>
<keyword id="KW-0052">Apoplast</keyword>
<keyword id="KW-0186">Copper</keyword>
<keyword id="KW-0325">Glycoprotein</keyword>
<keyword id="KW-0439">Lignin degradation</keyword>
<keyword id="KW-0479">Metal-binding</keyword>
<keyword id="KW-0560">Oxidoreductase</keyword>
<keyword id="KW-1185">Reference proteome</keyword>
<keyword id="KW-0677">Repeat</keyword>
<keyword id="KW-0964">Secreted</keyword>
<keyword id="KW-0732">Signal</keyword>
<dbReference type="EC" id="1.10.3.2"/>
<dbReference type="EMBL" id="AL163652">
    <property type="protein sequence ID" value="CAB87269.1"/>
    <property type="molecule type" value="Genomic_DNA"/>
</dbReference>
<dbReference type="EMBL" id="CP002688">
    <property type="protein sequence ID" value="AED91113.1"/>
    <property type="molecule type" value="Genomic_DNA"/>
</dbReference>
<dbReference type="PIR" id="T48484">
    <property type="entry name" value="T48484"/>
</dbReference>
<dbReference type="RefSeq" id="NP_196330.3">
    <property type="nucleotide sequence ID" value="NM_120795.5"/>
</dbReference>
<dbReference type="SMR" id="Q9LYQ2"/>
<dbReference type="STRING" id="3702.Q9LYQ2"/>
<dbReference type="GlyCosmos" id="Q9LYQ2">
    <property type="glycosylation" value="7 sites, No reported glycans"/>
</dbReference>
<dbReference type="GlyGen" id="Q9LYQ2">
    <property type="glycosylation" value="8 sites"/>
</dbReference>
<dbReference type="PaxDb" id="3702-AT5G07130.1"/>
<dbReference type="ProteomicsDB" id="238194"/>
<dbReference type="EnsemblPlants" id="AT5G07130.1">
    <property type="protein sequence ID" value="AT5G07130.1"/>
    <property type="gene ID" value="AT5G07130"/>
</dbReference>
<dbReference type="GeneID" id="830604"/>
<dbReference type="Gramene" id="AT5G07130.1">
    <property type="protein sequence ID" value="AT5G07130.1"/>
    <property type="gene ID" value="AT5G07130"/>
</dbReference>
<dbReference type="KEGG" id="ath:AT5G07130"/>
<dbReference type="Araport" id="AT5G07130"/>
<dbReference type="TAIR" id="AT5G07130">
    <property type="gene designation" value="LAC13"/>
</dbReference>
<dbReference type="eggNOG" id="KOG1263">
    <property type="taxonomic scope" value="Eukaryota"/>
</dbReference>
<dbReference type="HOGENOM" id="CLU_006504_6_3_1"/>
<dbReference type="InParanoid" id="Q9LYQ2"/>
<dbReference type="OMA" id="LDSHIFW"/>
<dbReference type="OrthoDB" id="2121828at2759"/>
<dbReference type="PhylomeDB" id="Q9LYQ2"/>
<dbReference type="BioCyc" id="ARA:AT5G07130-MONOMER"/>
<dbReference type="PRO" id="PR:Q9LYQ2"/>
<dbReference type="Proteomes" id="UP000006548">
    <property type="component" value="Chromosome 5"/>
</dbReference>
<dbReference type="ExpressionAtlas" id="Q9LYQ2">
    <property type="expression patterns" value="baseline and differential"/>
</dbReference>
<dbReference type="GO" id="GO:0048046">
    <property type="term" value="C:apoplast"/>
    <property type="evidence" value="ECO:0007669"/>
    <property type="project" value="UniProtKB-SubCell"/>
</dbReference>
<dbReference type="GO" id="GO:0048226">
    <property type="term" value="C:Casparian strip"/>
    <property type="evidence" value="ECO:0000314"/>
    <property type="project" value="TAIR"/>
</dbReference>
<dbReference type="GO" id="GO:0005507">
    <property type="term" value="F:copper ion binding"/>
    <property type="evidence" value="ECO:0007669"/>
    <property type="project" value="InterPro"/>
</dbReference>
<dbReference type="GO" id="GO:0052716">
    <property type="term" value="F:hydroquinone:oxygen oxidoreductase activity"/>
    <property type="evidence" value="ECO:0007669"/>
    <property type="project" value="UniProtKB-EC"/>
</dbReference>
<dbReference type="GO" id="GO:0046274">
    <property type="term" value="P:lignin catabolic process"/>
    <property type="evidence" value="ECO:0007669"/>
    <property type="project" value="UniProtKB-KW"/>
</dbReference>
<dbReference type="CDD" id="cd13849">
    <property type="entry name" value="CuRO_1_LCC_plant"/>
    <property type="match status" value="1"/>
</dbReference>
<dbReference type="CDD" id="cd13875">
    <property type="entry name" value="CuRO_2_LCC_plant"/>
    <property type="match status" value="1"/>
</dbReference>
<dbReference type="CDD" id="cd13897">
    <property type="entry name" value="CuRO_3_LCC_plant"/>
    <property type="match status" value="1"/>
</dbReference>
<dbReference type="FunFam" id="2.60.40.420:FF:000049">
    <property type="entry name" value="Laccase"/>
    <property type="match status" value="1"/>
</dbReference>
<dbReference type="FunFam" id="2.60.40.420:FF:000062">
    <property type="entry name" value="Laccase"/>
    <property type="match status" value="1"/>
</dbReference>
<dbReference type="Gene3D" id="2.60.40.420">
    <property type="entry name" value="Cupredoxins - blue copper proteins"/>
    <property type="match status" value="3"/>
</dbReference>
<dbReference type="InterPro" id="IPR011707">
    <property type="entry name" value="Cu-oxidase-like_N"/>
</dbReference>
<dbReference type="InterPro" id="IPR001117">
    <property type="entry name" value="Cu-oxidase_2nd"/>
</dbReference>
<dbReference type="InterPro" id="IPR011706">
    <property type="entry name" value="Cu-oxidase_C"/>
</dbReference>
<dbReference type="InterPro" id="IPR045087">
    <property type="entry name" value="Cu-oxidase_fam"/>
</dbReference>
<dbReference type="InterPro" id="IPR033138">
    <property type="entry name" value="Cu_oxidase_CS"/>
</dbReference>
<dbReference type="InterPro" id="IPR002355">
    <property type="entry name" value="Cu_oxidase_Cu_BS"/>
</dbReference>
<dbReference type="InterPro" id="IPR008972">
    <property type="entry name" value="Cupredoxin"/>
</dbReference>
<dbReference type="InterPro" id="IPR034288">
    <property type="entry name" value="CuRO_1_LCC"/>
</dbReference>
<dbReference type="InterPro" id="IPR034285">
    <property type="entry name" value="CuRO_2_LCC"/>
</dbReference>
<dbReference type="InterPro" id="IPR034289">
    <property type="entry name" value="CuRO_3_LCC"/>
</dbReference>
<dbReference type="InterPro" id="IPR017761">
    <property type="entry name" value="Laccase"/>
</dbReference>
<dbReference type="NCBIfam" id="TIGR03389">
    <property type="entry name" value="laccase"/>
    <property type="match status" value="1"/>
</dbReference>
<dbReference type="PANTHER" id="PTHR11709:SF68">
    <property type="entry name" value="LACCASE-13"/>
    <property type="match status" value="1"/>
</dbReference>
<dbReference type="PANTHER" id="PTHR11709">
    <property type="entry name" value="MULTI-COPPER OXIDASE"/>
    <property type="match status" value="1"/>
</dbReference>
<dbReference type="Pfam" id="PF00394">
    <property type="entry name" value="Cu-oxidase"/>
    <property type="match status" value="1"/>
</dbReference>
<dbReference type="Pfam" id="PF07731">
    <property type="entry name" value="Cu-oxidase_2"/>
    <property type="match status" value="1"/>
</dbReference>
<dbReference type="Pfam" id="PF07732">
    <property type="entry name" value="Cu-oxidase_3"/>
    <property type="match status" value="1"/>
</dbReference>
<dbReference type="SUPFAM" id="SSF49503">
    <property type="entry name" value="Cupredoxins"/>
    <property type="match status" value="3"/>
</dbReference>
<dbReference type="PROSITE" id="PS00079">
    <property type="entry name" value="MULTICOPPER_OXIDASE1"/>
    <property type="match status" value="1"/>
</dbReference>
<dbReference type="PROSITE" id="PS00080">
    <property type="entry name" value="MULTICOPPER_OXIDASE2"/>
    <property type="match status" value="1"/>
</dbReference>
<reference key="1">
    <citation type="journal article" date="2000" name="Nature">
        <title>Sequence and analysis of chromosome 5 of the plant Arabidopsis thaliana.</title>
        <authorList>
            <person name="Tabata S."/>
            <person name="Kaneko T."/>
            <person name="Nakamura Y."/>
            <person name="Kotani H."/>
            <person name="Kato T."/>
            <person name="Asamizu E."/>
            <person name="Miyajima N."/>
            <person name="Sasamoto S."/>
            <person name="Kimura T."/>
            <person name="Hosouchi T."/>
            <person name="Kawashima K."/>
            <person name="Kohara M."/>
            <person name="Matsumoto M."/>
            <person name="Matsuno A."/>
            <person name="Muraki A."/>
            <person name="Nakayama S."/>
            <person name="Nakazaki N."/>
            <person name="Naruo K."/>
            <person name="Okumura S."/>
            <person name="Shinpo S."/>
            <person name="Takeuchi C."/>
            <person name="Wada T."/>
            <person name="Watanabe A."/>
            <person name="Yamada M."/>
            <person name="Yasuda M."/>
            <person name="Sato S."/>
            <person name="de la Bastide M."/>
            <person name="Huang E."/>
            <person name="Spiegel L."/>
            <person name="Gnoj L."/>
            <person name="O'Shaughnessy A."/>
            <person name="Preston R."/>
            <person name="Habermann K."/>
            <person name="Murray J."/>
            <person name="Johnson D."/>
            <person name="Rohlfing T."/>
            <person name="Nelson J."/>
            <person name="Stoneking T."/>
            <person name="Pepin K."/>
            <person name="Spieth J."/>
            <person name="Sekhon M."/>
            <person name="Armstrong J."/>
            <person name="Becker M."/>
            <person name="Belter E."/>
            <person name="Cordum H."/>
            <person name="Cordes M."/>
            <person name="Courtney L."/>
            <person name="Courtney W."/>
            <person name="Dante M."/>
            <person name="Du H."/>
            <person name="Edwards J."/>
            <person name="Fryman J."/>
            <person name="Haakensen B."/>
            <person name="Lamar E."/>
            <person name="Latreille P."/>
            <person name="Leonard S."/>
            <person name="Meyer R."/>
            <person name="Mulvaney E."/>
            <person name="Ozersky P."/>
            <person name="Riley A."/>
            <person name="Strowmatt C."/>
            <person name="Wagner-McPherson C."/>
            <person name="Wollam A."/>
            <person name="Yoakum M."/>
            <person name="Bell M."/>
            <person name="Dedhia N."/>
            <person name="Parnell L."/>
            <person name="Shah R."/>
            <person name="Rodriguez M."/>
            <person name="Hoon See L."/>
            <person name="Vil D."/>
            <person name="Baker J."/>
            <person name="Kirchoff K."/>
            <person name="Toth K."/>
            <person name="King L."/>
            <person name="Bahret A."/>
            <person name="Miller B."/>
            <person name="Marra M.A."/>
            <person name="Martienssen R."/>
            <person name="McCombie W.R."/>
            <person name="Wilson R.K."/>
            <person name="Murphy G."/>
            <person name="Bancroft I."/>
            <person name="Volckaert G."/>
            <person name="Wambutt R."/>
            <person name="Duesterhoeft A."/>
            <person name="Stiekema W."/>
            <person name="Pohl T."/>
            <person name="Entian K.-D."/>
            <person name="Terryn N."/>
            <person name="Hartley N."/>
            <person name="Bent E."/>
            <person name="Johnson S."/>
            <person name="Langham S.-A."/>
            <person name="McCullagh B."/>
            <person name="Robben J."/>
            <person name="Grymonprez B."/>
            <person name="Zimmermann W."/>
            <person name="Ramsperger U."/>
            <person name="Wedler H."/>
            <person name="Balke K."/>
            <person name="Wedler E."/>
            <person name="Peters S."/>
            <person name="van Staveren M."/>
            <person name="Dirkse W."/>
            <person name="Mooijman P."/>
            <person name="Klein Lankhorst R."/>
            <person name="Weitzenegger T."/>
            <person name="Bothe G."/>
            <person name="Rose M."/>
            <person name="Hauf J."/>
            <person name="Berneiser S."/>
            <person name="Hempel S."/>
            <person name="Feldpausch M."/>
            <person name="Lamberth S."/>
            <person name="Villarroel R."/>
            <person name="Gielen J."/>
            <person name="Ardiles W."/>
            <person name="Bents O."/>
            <person name="Lemcke K."/>
            <person name="Kolesov G."/>
            <person name="Mayer K.F.X."/>
            <person name="Rudd S."/>
            <person name="Schoof H."/>
            <person name="Schueller C."/>
            <person name="Zaccaria P."/>
            <person name="Mewes H.-W."/>
            <person name="Bevan M."/>
            <person name="Fransz P.F."/>
        </authorList>
    </citation>
    <scope>NUCLEOTIDE SEQUENCE [LARGE SCALE GENOMIC DNA]</scope>
    <source>
        <strain>cv. Columbia</strain>
    </source>
</reference>
<reference key="2">
    <citation type="journal article" date="2017" name="Plant J.">
        <title>Araport11: a complete reannotation of the Arabidopsis thaliana reference genome.</title>
        <authorList>
            <person name="Cheng C.Y."/>
            <person name="Krishnakumar V."/>
            <person name="Chan A.P."/>
            <person name="Thibaud-Nissen F."/>
            <person name="Schobel S."/>
            <person name="Town C.D."/>
        </authorList>
    </citation>
    <scope>GENOME REANNOTATION</scope>
    <source>
        <strain>cv. Columbia</strain>
    </source>
</reference>
<reference key="3">
    <citation type="journal article" date="2006" name="J. Exp. Bot.">
        <title>Mutant identification and characterization of the laccase gene family in Arabidopsis.</title>
        <authorList>
            <person name="Cai X."/>
            <person name="Davis E.J."/>
            <person name="Ballif J."/>
            <person name="Liang M."/>
            <person name="Bushman E."/>
            <person name="Haroldsen V."/>
            <person name="Torabinejad J."/>
            <person name="Wu Y."/>
        </authorList>
    </citation>
    <scope>TISSUE SPECIFICITY</scope>
</reference>
<name>LAC13_ARATH</name>
<gene>
    <name type="primary">LAC13</name>
    <name type="ordered locus">At5g07130</name>
    <name type="ORF">T28J14.70</name>
</gene>
<protein>
    <recommendedName>
        <fullName>Laccase-13</fullName>
        <ecNumber>1.10.3.2</ecNumber>
    </recommendedName>
    <alternativeName>
        <fullName>Benzenediol:oxygen oxidoreductase 13</fullName>
    </alternativeName>
    <alternativeName>
        <fullName>Diphenol oxidase 13</fullName>
    </alternativeName>
    <alternativeName>
        <fullName>Urishiol oxidase 13</fullName>
    </alternativeName>
</protein>
<accession>Q9LYQ2</accession>
<feature type="signal peptide" evidence="2">
    <location>
        <begin position="1"/>
        <end position="21"/>
    </location>
</feature>
<feature type="chain" id="PRO_0000283641" description="Laccase-13">
    <location>
        <begin position="22"/>
        <end position="569"/>
    </location>
</feature>
<feature type="domain" description="Plastocyanin-like 1">
    <location>
        <begin position="29"/>
        <end position="145"/>
    </location>
</feature>
<feature type="domain" description="Plastocyanin-like 2">
    <location>
        <begin position="157"/>
        <end position="308"/>
    </location>
</feature>
<feature type="domain" description="Plastocyanin-like 3">
    <location>
        <begin position="418"/>
        <end position="553"/>
    </location>
</feature>
<feature type="binding site" description="type 2 copper site" evidence="1">
    <location>
        <position position="79"/>
    </location>
    <ligand>
        <name>Cu cation</name>
        <dbReference type="ChEBI" id="CHEBI:23378"/>
        <label>1</label>
    </ligand>
</feature>
<feature type="binding site" description="type 3 copper site" evidence="1">
    <location>
        <position position="81"/>
    </location>
    <ligand>
        <name>Cu cation</name>
        <dbReference type="ChEBI" id="CHEBI:23378"/>
        <label>2</label>
    </ligand>
</feature>
<feature type="binding site" description="type 3 copper site" evidence="1">
    <location>
        <position position="124"/>
    </location>
    <ligand>
        <name>Cu cation</name>
        <dbReference type="ChEBI" id="CHEBI:23378"/>
        <label>2</label>
    </ligand>
</feature>
<feature type="binding site" description="type 3 copper site" evidence="1">
    <location>
        <position position="126"/>
    </location>
    <ligand>
        <name>Cu cation</name>
        <dbReference type="ChEBI" id="CHEBI:23378"/>
        <label>3</label>
    </ligand>
</feature>
<feature type="binding site" description="type 1 copper site" evidence="1">
    <location>
        <position position="470"/>
    </location>
    <ligand>
        <name>Cu cation</name>
        <dbReference type="ChEBI" id="CHEBI:23378"/>
        <label>4</label>
    </ligand>
</feature>
<feature type="binding site" description="type 2 copper site" evidence="1">
    <location>
        <position position="473"/>
    </location>
    <ligand>
        <name>Cu cation</name>
        <dbReference type="ChEBI" id="CHEBI:23378"/>
        <label>1</label>
    </ligand>
</feature>
<feature type="binding site" description="type 3 copper site" evidence="1">
    <location>
        <position position="475"/>
    </location>
    <ligand>
        <name>Cu cation</name>
        <dbReference type="ChEBI" id="CHEBI:23378"/>
        <label>3</label>
    </ligand>
</feature>
<feature type="binding site" description="type 3 copper site" evidence="1">
    <location>
        <position position="532"/>
    </location>
    <ligand>
        <name>Cu cation</name>
        <dbReference type="ChEBI" id="CHEBI:23378"/>
        <label>3</label>
    </ligand>
</feature>
<feature type="binding site" description="type 1 copper site" evidence="1">
    <location>
        <position position="533"/>
    </location>
    <ligand>
        <name>Cu cation</name>
        <dbReference type="ChEBI" id="CHEBI:23378"/>
        <label>4</label>
    </ligand>
</feature>
<feature type="binding site" description="type 3 copper site" evidence="1">
    <location>
        <position position="534"/>
    </location>
    <ligand>
        <name>Cu cation</name>
        <dbReference type="ChEBI" id="CHEBI:23378"/>
        <label>2</label>
    </ligand>
</feature>
<feature type="binding site" description="type 1 copper site" evidence="1">
    <location>
        <position position="538"/>
    </location>
    <ligand>
        <name>Cu cation</name>
        <dbReference type="ChEBI" id="CHEBI:23378"/>
        <label>4</label>
    </ligand>
</feature>
<feature type="glycosylation site" description="N-linked (GlcNAc...) asparagine" evidence="2">
    <location>
        <position position="75"/>
    </location>
</feature>
<feature type="glycosylation site" description="N-linked (GlcNAc...) asparagine" evidence="2">
    <location>
        <position position="186"/>
    </location>
</feature>
<feature type="glycosylation site" description="N-linked (GlcNAc...) asparagine" evidence="2">
    <location>
        <position position="296"/>
    </location>
</feature>
<feature type="glycosylation site" description="N-linked (GlcNAc...) asparagine" evidence="2">
    <location>
        <position position="330"/>
    </location>
</feature>
<feature type="glycosylation site" description="N-linked (GlcNAc...) asparagine" evidence="2">
    <location>
        <position position="381"/>
    </location>
</feature>
<feature type="glycosylation site" description="N-linked (GlcNAc...) asparagine" evidence="2">
    <location>
        <position position="391"/>
    </location>
</feature>
<feature type="glycosylation site" description="N-linked (GlcNAc...) asparagine" evidence="2">
    <location>
        <position position="432"/>
    </location>
</feature>
<proteinExistence type="evidence at transcript level"/>